<sequence length="288" mass="32206">MQIITNPREMQNIAENLRMKHQLIAVVMTMGALHEGHLSLIKLAKQQAGTVILTIFVNPAQFGENEDFHCYPRPFEKDSSMARAAEVDYLFAPDASMMYPEGFQTGIHNGPVAAILEGEHRPDHFNGVSTVVLKLMMICKAHIAVFGEKDAQQLAVIKRMTNDLNIDIRILEAPLLRDDDGVAISSRNIYLSSEERKQAAVLFRALSLADKRIQEGCTAAEKLIDEAISLIEQEPDAKIDYVSIVEAESFTQSALLEPGKEYRMVLAIWIGTTRLIDNRKYRVPLISA</sequence>
<keyword id="KW-0067">ATP-binding</keyword>
<keyword id="KW-0963">Cytoplasm</keyword>
<keyword id="KW-0436">Ligase</keyword>
<keyword id="KW-0547">Nucleotide-binding</keyword>
<keyword id="KW-0566">Pantothenate biosynthesis</keyword>
<reference key="1">
    <citation type="submission" date="2008-06" db="EMBL/GenBank/DDBJ databases">
        <title>Complete sequence of chromosome of Prosthecochloris aestuarii DSM 271.</title>
        <authorList>
            <consortium name="US DOE Joint Genome Institute"/>
            <person name="Lucas S."/>
            <person name="Copeland A."/>
            <person name="Lapidus A."/>
            <person name="Glavina del Rio T."/>
            <person name="Dalin E."/>
            <person name="Tice H."/>
            <person name="Bruce D."/>
            <person name="Goodwin L."/>
            <person name="Pitluck S."/>
            <person name="Schmutz J."/>
            <person name="Larimer F."/>
            <person name="Land M."/>
            <person name="Hauser L."/>
            <person name="Kyrpides N."/>
            <person name="Anderson I."/>
            <person name="Liu Z."/>
            <person name="Li T."/>
            <person name="Zhao F."/>
            <person name="Overmann J."/>
            <person name="Bryant D.A."/>
            <person name="Richardson P."/>
        </authorList>
    </citation>
    <scope>NUCLEOTIDE SEQUENCE [LARGE SCALE GENOMIC DNA]</scope>
    <source>
        <strain>DSM 271 / SK 413</strain>
    </source>
</reference>
<comment type="function">
    <text evidence="1">Catalyzes the condensation of pantoate with beta-alanine in an ATP-dependent reaction via a pantoyl-adenylate intermediate.</text>
</comment>
<comment type="catalytic activity">
    <reaction evidence="1">
        <text>(R)-pantoate + beta-alanine + ATP = (R)-pantothenate + AMP + diphosphate + H(+)</text>
        <dbReference type="Rhea" id="RHEA:10912"/>
        <dbReference type="ChEBI" id="CHEBI:15378"/>
        <dbReference type="ChEBI" id="CHEBI:15980"/>
        <dbReference type="ChEBI" id="CHEBI:29032"/>
        <dbReference type="ChEBI" id="CHEBI:30616"/>
        <dbReference type="ChEBI" id="CHEBI:33019"/>
        <dbReference type="ChEBI" id="CHEBI:57966"/>
        <dbReference type="ChEBI" id="CHEBI:456215"/>
        <dbReference type="EC" id="6.3.2.1"/>
    </reaction>
</comment>
<comment type="pathway">
    <text evidence="1">Cofactor biosynthesis; (R)-pantothenate biosynthesis; (R)-pantothenate from (R)-pantoate and beta-alanine: step 1/1.</text>
</comment>
<comment type="subunit">
    <text evidence="1">Homodimer.</text>
</comment>
<comment type="subcellular location">
    <subcellularLocation>
        <location evidence="1">Cytoplasm</location>
    </subcellularLocation>
</comment>
<comment type="miscellaneous">
    <text evidence="1">The reaction proceeds by a bi uni uni bi ping pong mechanism.</text>
</comment>
<comment type="similarity">
    <text evidence="1">Belongs to the pantothenate synthetase family.</text>
</comment>
<organism>
    <name type="scientific">Prosthecochloris aestuarii (strain DSM 271 / SK 413)</name>
    <dbReference type="NCBI Taxonomy" id="290512"/>
    <lineage>
        <taxon>Bacteria</taxon>
        <taxon>Pseudomonadati</taxon>
        <taxon>Chlorobiota</taxon>
        <taxon>Chlorobiia</taxon>
        <taxon>Chlorobiales</taxon>
        <taxon>Chlorobiaceae</taxon>
        <taxon>Prosthecochloris</taxon>
    </lineage>
</organism>
<gene>
    <name evidence="1" type="primary">panC</name>
    <name type="ordered locus">Paes_0507</name>
</gene>
<feature type="chain" id="PRO_1000097088" description="Pantothenate synthetase">
    <location>
        <begin position="1"/>
        <end position="288"/>
    </location>
</feature>
<feature type="active site" description="Proton donor" evidence="1">
    <location>
        <position position="37"/>
    </location>
</feature>
<feature type="binding site" evidence="1">
    <location>
        <begin position="30"/>
        <end position="37"/>
    </location>
    <ligand>
        <name>ATP</name>
        <dbReference type="ChEBI" id="CHEBI:30616"/>
    </ligand>
</feature>
<feature type="binding site" evidence="1">
    <location>
        <position position="61"/>
    </location>
    <ligand>
        <name>(R)-pantoate</name>
        <dbReference type="ChEBI" id="CHEBI:15980"/>
    </ligand>
</feature>
<feature type="binding site" evidence="1">
    <location>
        <position position="61"/>
    </location>
    <ligand>
        <name>beta-alanine</name>
        <dbReference type="ChEBI" id="CHEBI:57966"/>
    </ligand>
</feature>
<feature type="binding site" evidence="1">
    <location>
        <begin position="147"/>
        <end position="150"/>
    </location>
    <ligand>
        <name>ATP</name>
        <dbReference type="ChEBI" id="CHEBI:30616"/>
    </ligand>
</feature>
<feature type="binding site" evidence="1">
    <location>
        <position position="153"/>
    </location>
    <ligand>
        <name>(R)-pantoate</name>
        <dbReference type="ChEBI" id="CHEBI:15980"/>
    </ligand>
</feature>
<feature type="binding site" evidence="1">
    <location>
        <position position="176"/>
    </location>
    <ligand>
        <name>ATP</name>
        <dbReference type="ChEBI" id="CHEBI:30616"/>
    </ligand>
</feature>
<feature type="binding site" evidence="1">
    <location>
        <begin position="184"/>
        <end position="187"/>
    </location>
    <ligand>
        <name>ATP</name>
        <dbReference type="ChEBI" id="CHEBI:30616"/>
    </ligand>
</feature>
<accession>B4S5G6</accession>
<evidence type="ECO:0000255" key="1">
    <source>
        <dbReference type="HAMAP-Rule" id="MF_00158"/>
    </source>
</evidence>
<name>PANC_PROA2</name>
<protein>
    <recommendedName>
        <fullName evidence="1">Pantothenate synthetase</fullName>
        <shortName evidence="1">PS</shortName>
        <ecNumber evidence="1">6.3.2.1</ecNumber>
    </recommendedName>
    <alternativeName>
        <fullName evidence="1">Pantoate--beta-alanine ligase</fullName>
    </alternativeName>
    <alternativeName>
        <fullName evidence="1">Pantoate-activating enzyme</fullName>
    </alternativeName>
</protein>
<dbReference type="EC" id="6.3.2.1" evidence="1"/>
<dbReference type="EMBL" id="CP001108">
    <property type="protein sequence ID" value="ACF45563.1"/>
    <property type="molecule type" value="Genomic_DNA"/>
</dbReference>
<dbReference type="RefSeq" id="WP_012505100.1">
    <property type="nucleotide sequence ID" value="NC_011059.1"/>
</dbReference>
<dbReference type="SMR" id="B4S5G6"/>
<dbReference type="STRING" id="290512.Paes_0507"/>
<dbReference type="KEGG" id="paa:Paes_0507"/>
<dbReference type="eggNOG" id="COG0414">
    <property type="taxonomic scope" value="Bacteria"/>
</dbReference>
<dbReference type="HOGENOM" id="CLU_047148_0_0_10"/>
<dbReference type="UniPathway" id="UPA00028">
    <property type="reaction ID" value="UER00005"/>
</dbReference>
<dbReference type="Proteomes" id="UP000002725">
    <property type="component" value="Chromosome"/>
</dbReference>
<dbReference type="GO" id="GO:0005829">
    <property type="term" value="C:cytosol"/>
    <property type="evidence" value="ECO:0007669"/>
    <property type="project" value="TreeGrafter"/>
</dbReference>
<dbReference type="GO" id="GO:0005524">
    <property type="term" value="F:ATP binding"/>
    <property type="evidence" value="ECO:0007669"/>
    <property type="project" value="UniProtKB-KW"/>
</dbReference>
<dbReference type="GO" id="GO:0004592">
    <property type="term" value="F:pantoate-beta-alanine ligase activity"/>
    <property type="evidence" value="ECO:0007669"/>
    <property type="project" value="UniProtKB-UniRule"/>
</dbReference>
<dbReference type="GO" id="GO:0015940">
    <property type="term" value="P:pantothenate biosynthetic process"/>
    <property type="evidence" value="ECO:0007669"/>
    <property type="project" value="UniProtKB-UniRule"/>
</dbReference>
<dbReference type="CDD" id="cd00560">
    <property type="entry name" value="PanC"/>
    <property type="match status" value="1"/>
</dbReference>
<dbReference type="Gene3D" id="3.40.50.620">
    <property type="entry name" value="HUPs"/>
    <property type="match status" value="1"/>
</dbReference>
<dbReference type="Gene3D" id="3.30.1300.10">
    <property type="entry name" value="Pantoate-beta-alanine ligase, C-terminal domain"/>
    <property type="match status" value="1"/>
</dbReference>
<dbReference type="HAMAP" id="MF_00158">
    <property type="entry name" value="PanC"/>
    <property type="match status" value="1"/>
</dbReference>
<dbReference type="InterPro" id="IPR004821">
    <property type="entry name" value="Cyt_trans-like"/>
</dbReference>
<dbReference type="InterPro" id="IPR003721">
    <property type="entry name" value="Pantoate_ligase"/>
</dbReference>
<dbReference type="InterPro" id="IPR042176">
    <property type="entry name" value="Pantoate_ligase_C"/>
</dbReference>
<dbReference type="InterPro" id="IPR014729">
    <property type="entry name" value="Rossmann-like_a/b/a_fold"/>
</dbReference>
<dbReference type="NCBIfam" id="TIGR00125">
    <property type="entry name" value="cyt_tran_rel"/>
    <property type="match status" value="1"/>
</dbReference>
<dbReference type="NCBIfam" id="TIGR00018">
    <property type="entry name" value="panC"/>
    <property type="match status" value="1"/>
</dbReference>
<dbReference type="PANTHER" id="PTHR21299">
    <property type="entry name" value="CYTIDYLATE KINASE/PANTOATE-BETA-ALANINE LIGASE"/>
    <property type="match status" value="1"/>
</dbReference>
<dbReference type="PANTHER" id="PTHR21299:SF1">
    <property type="entry name" value="PANTOATE--BETA-ALANINE LIGASE"/>
    <property type="match status" value="1"/>
</dbReference>
<dbReference type="Pfam" id="PF02569">
    <property type="entry name" value="Pantoate_ligase"/>
    <property type="match status" value="1"/>
</dbReference>
<dbReference type="SUPFAM" id="SSF52374">
    <property type="entry name" value="Nucleotidylyl transferase"/>
    <property type="match status" value="1"/>
</dbReference>
<proteinExistence type="inferred from homology"/>